<sequence>MSQEKKVFKTEWAGRSLTIETGQLAKQANGAVLVRYGDTVVLSTATASKEPRDGDFFPLTVNYEEKMYAAGKIPGGFKKREGRPGDDATLTARLIDRPIRPLFPKGYKHDVQIMNMVLSADPDCSPQMAAMIGSSMALSVSDIPFQGPIAGVNVGYIDGKYIINPTVEEKEVSRLDLEVAGHKDAVNMVEAGASEITEQEMLEAIFFGHEEIQRLVDFQQQIVDHIQPVKQEFIPTERDEALVERVKSLTEEKGLKETVLTFDKQQRDENLDNLKEEIVNEFIDEEDPENELLIKEVYAILNELVKEEVRRLIADEKIRPDGRKPDEIRPLDSEVGILPRTHGSGLFTRGQTQALSVLTLGALGDYQLIDGLGPEEEKRFMHHYNFPNFSVGETGPVRAPGRREIGHGALGERALKYIIPDTADFPYTIRIVSEVLESNGSSSQASICGSTLALMDAGVPIKAPVAGIAMGLVTREDSYTILTDIQGMEDALGDMDFKVAGTKEGITAIQMDIKIDGLTREIIEEALEQARRGRLEIMNHMLQTIDQPRTELSAYAPKVVTMTIKPDKIRDVIGPGGKKINEIIDETGVKLDIEQDGTIFIGAVDQAMINRAREIIEEITREAEVGQTYQATVKRIEKYGAFVGLFPGKDALLHISQISKNRIEKVEDVLKIGDTIEVKITEIDKQGRVNASHRALEE</sequence>
<proteinExistence type="inferred from homology"/>
<accession>Q6GHG1</accession>
<protein>
    <recommendedName>
        <fullName evidence="1">Polyribonucleotide nucleotidyltransferase</fullName>
        <ecNumber evidence="1">2.7.7.8</ecNumber>
    </recommendedName>
    <alternativeName>
        <fullName evidence="1">Polynucleotide phosphorylase</fullName>
        <shortName evidence="1">PNPase</shortName>
    </alternativeName>
</protein>
<feature type="chain" id="PRO_0000260055" description="Polyribonucleotide nucleotidyltransferase">
    <location>
        <begin position="1"/>
        <end position="698"/>
    </location>
</feature>
<feature type="domain" description="KH" evidence="1">
    <location>
        <begin position="557"/>
        <end position="616"/>
    </location>
</feature>
<feature type="domain" description="S1 motif" evidence="1">
    <location>
        <begin position="626"/>
        <end position="694"/>
    </location>
</feature>
<feature type="binding site" evidence="1">
    <location>
        <position position="490"/>
    </location>
    <ligand>
        <name>Mg(2+)</name>
        <dbReference type="ChEBI" id="CHEBI:18420"/>
    </ligand>
</feature>
<feature type="binding site" evidence="1">
    <location>
        <position position="496"/>
    </location>
    <ligand>
        <name>Mg(2+)</name>
        <dbReference type="ChEBI" id="CHEBI:18420"/>
    </ligand>
</feature>
<name>PNP_STAAR</name>
<dbReference type="EC" id="2.7.7.8" evidence="1"/>
<dbReference type="EMBL" id="BX571856">
    <property type="protein sequence ID" value="CAG40252.1"/>
    <property type="molecule type" value="Genomic_DNA"/>
</dbReference>
<dbReference type="RefSeq" id="WP_000076692.1">
    <property type="nucleotide sequence ID" value="NC_002952.2"/>
</dbReference>
<dbReference type="SMR" id="Q6GHG1"/>
<dbReference type="IntAct" id="Q6GHG1">
    <property type="interactions" value="1"/>
</dbReference>
<dbReference type="KEGG" id="sar:SAR1250"/>
<dbReference type="HOGENOM" id="CLU_004217_2_2_9"/>
<dbReference type="Proteomes" id="UP000000596">
    <property type="component" value="Chromosome"/>
</dbReference>
<dbReference type="GO" id="GO:0005829">
    <property type="term" value="C:cytosol"/>
    <property type="evidence" value="ECO:0007669"/>
    <property type="project" value="TreeGrafter"/>
</dbReference>
<dbReference type="GO" id="GO:0000175">
    <property type="term" value="F:3'-5'-RNA exonuclease activity"/>
    <property type="evidence" value="ECO:0007669"/>
    <property type="project" value="TreeGrafter"/>
</dbReference>
<dbReference type="GO" id="GO:0000287">
    <property type="term" value="F:magnesium ion binding"/>
    <property type="evidence" value="ECO:0007669"/>
    <property type="project" value="UniProtKB-UniRule"/>
</dbReference>
<dbReference type="GO" id="GO:0004654">
    <property type="term" value="F:polyribonucleotide nucleotidyltransferase activity"/>
    <property type="evidence" value="ECO:0007669"/>
    <property type="project" value="UniProtKB-UniRule"/>
</dbReference>
<dbReference type="GO" id="GO:0003723">
    <property type="term" value="F:RNA binding"/>
    <property type="evidence" value="ECO:0007669"/>
    <property type="project" value="UniProtKB-UniRule"/>
</dbReference>
<dbReference type="GO" id="GO:0006402">
    <property type="term" value="P:mRNA catabolic process"/>
    <property type="evidence" value="ECO:0007669"/>
    <property type="project" value="UniProtKB-UniRule"/>
</dbReference>
<dbReference type="GO" id="GO:0006396">
    <property type="term" value="P:RNA processing"/>
    <property type="evidence" value="ECO:0007669"/>
    <property type="project" value="InterPro"/>
</dbReference>
<dbReference type="CDD" id="cd02393">
    <property type="entry name" value="KH-I_PNPase"/>
    <property type="match status" value="1"/>
</dbReference>
<dbReference type="CDD" id="cd11363">
    <property type="entry name" value="RNase_PH_PNPase_1"/>
    <property type="match status" value="1"/>
</dbReference>
<dbReference type="CDD" id="cd11364">
    <property type="entry name" value="RNase_PH_PNPase_2"/>
    <property type="match status" value="1"/>
</dbReference>
<dbReference type="CDD" id="cd04472">
    <property type="entry name" value="S1_PNPase"/>
    <property type="match status" value="1"/>
</dbReference>
<dbReference type="FunFam" id="2.40.50.140:FF:000023">
    <property type="entry name" value="Polyribonucleotide nucleotidyltransferase"/>
    <property type="match status" value="1"/>
</dbReference>
<dbReference type="FunFam" id="3.30.1370.10:FF:000001">
    <property type="entry name" value="Polyribonucleotide nucleotidyltransferase"/>
    <property type="match status" value="1"/>
</dbReference>
<dbReference type="FunFam" id="3.30.230.70:FF:000001">
    <property type="entry name" value="Polyribonucleotide nucleotidyltransferase"/>
    <property type="match status" value="1"/>
</dbReference>
<dbReference type="FunFam" id="3.30.230.70:FF:000002">
    <property type="entry name" value="Polyribonucleotide nucleotidyltransferase"/>
    <property type="match status" value="1"/>
</dbReference>
<dbReference type="Gene3D" id="3.30.230.70">
    <property type="entry name" value="GHMP Kinase, N-terminal domain"/>
    <property type="match status" value="2"/>
</dbReference>
<dbReference type="Gene3D" id="3.30.1370.10">
    <property type="entry name" value="K Homology domain, type 1"/>
    <property type="match status" value="1"/>
</dbReference>
<dbReference type="Gene3D" id="2.40.50.140">
    <property type="entry name" value="Nucleic acid-binding proteins"/>
    <property type="match status" value="1"/>
</dbReference>
<dbReference type="HAMAP" id="MF_01595">
    <property type="entry name" value="PNPase"/>
    <property type="match status" value="1"/>
</dbReference>
<dbReference type="InterPro" id="IPR001247">
    <property type="entry name" value="ExoRNase_PH_dom1"/>
</dbReference>
<dbReference type="InterPro" id="IPR015847">
    <property type="entry name" value="ExoRNase_PH_dom2"/>
</dbReference>
<dbReference type="InterPro" id="IPR036345">
    <property type="entry name" value="ExoRNase_PH_dom2_sf"/>
</dbReference>
<dbReference type="InterPro" id="IPR004087">
    <property type="entry name" value="KH_dom"/>
</dbReference>
<dbReference type="InterPro" id="IPR004088">
    <property type="entry name" value="KH_dom_type_1"/>
</dbReference>
<dbReference type="InterPro" id="IPR036612">
    <property type="entry name" value="KH_dom_type_1_sf"/>
</dbReference>
<dbReference type="InterPro" id="IPR012340">
    <property type="entry name" value="NA-bd_OB-fold"/>
</dbReference>
<dbReference type="InterPro" id="IPR012162">
    <property type="entry name" value="PNPase"/>
</dbReference>
<dbReference type="InterPro" id="IPR027408">
    <property type="entry name" value="PNPase/RNase_PH_dom_sf"/>
</dbReference>
<dbReference type="InterPro" id="IPR015848">
    <property type="entry name" value="PNPase_PH_RNA-bd_bac/org-type"/>
</dbReference>
<dbReference type="InterPro" id="IPR036456">
    <property type="entry name" value="PNPase_PH_RNA-bd_sf"/>
</dbReference>
<dbReference type="InterPro" id="IPR020568">
    <property type="entry name" value="Ribosomal_Su5_D2-typ_SF"/>
</dbReference>
<dbReference type="InterPro" id="IPR003029">
    <property type="entry name" value="S1_domain"/>
</dbReference>
<dbReference type="NCBIfam" id="TIGR03591">
    <property type="entry name" value="polynuc_phos"/>
    <property type="match status" value="1"/>
</dbReference>
<dbReference type="NCBIfam" id="NF008805">
    <property type="entry name" value="PRK11824.1"/>
    <property type="match status" value="1"/>
</dbReference>
<dbReference type="PANTHER" id="PTHR11252">
    <property type="entry name" value="POLYRIBONUCLEOTIDE NUCLEOTIDYLTRANSFERASE"/>
    <property type="match status" value="1"/>
</dbReference>
<dbReference type="PANTHER" id="PTHR11252:SF0">
    <property type="entry name" value="POLYRIBONUCLEOTIDE NUCLEOTIDYLTRANSFERASE 1, MITOCHONDRIAL"/>
    <property type="match status" value="1"/>
</dbReference>
<dbReference type="Pfam" id="PF00013">
    <property type="entry name" value="KH_1"/>
    <property type="match status" value="1"/>
</dbReference>
<dbReference type="Pfam" id="PF03726">
    <property type="entry name" value="PNPase"/>
    <property type="match status" value="1"/>
</dbReference>
<dbReference type="Pfam" id="PF01138">
    <property type="entry name" value="RNase_PH"/>
    <property type="match status" value="2"/>
</dbReference>
<dbReference type="Pfam" id="PF03725">
    <property type="entry name" value="RNase_PH_C"/>
    <property type="match status" value="2"/>
</dbReference>
<dbReference type="Pfam" id="PF00575">
    <property type="entry name" value="S1"/>
    <property type="match status" value="1"/>
</dbReference>
<dbReference type="PIRSF" id="PIRSF005499">
    <property type="entry name" value="PNPase"/>
    <property type="match status" value="1"/>
</dbReference>
<dbReference type="SMART" id="SM00322">
    <property type="entry name" value="KH"/>
    <property type="match status" value="1"/>
</dbReference>
<dbReference type="SMART" id="SM00316">
    <property type="entry name" value="S1"/>
    <property type="match status" value="1"/>
</dbReference>
<dbReference type="SUPFAM" id="SSF54791">
    <property type="entry name" value="Eukaryotic type KH-domain (KH-domain type I)"/>
    <property type="match status" value="1"/>
</dbReference>
<dbReference type="SUPFAM" id="SSF50249">
    <property type="entry name" value="Nucleic acid-binding proteins"/>
    <property type="match status" value="1"/>
</dbReference>
<dbReference type="SUPFAM" id="SSF46915">
    <property type="entry name" value="Polynucleotide phosphorylase/guanosine pentaphosphate synthase (PNPase/GPSI), domain 3"/>
    <property type="match status" value="1"/>
</dbReference>
<dbReference type="SUPFAM" id="SSF55666">
    <property type="entry name" value="Ribonuclease PH domain 2-like"/>
    <property type="match status" value="2"/>
</dbReference>
<dbReference type="SUPFAM" id="SSF54211">
    <property type="entry name" value="Ribosomal protein S5 domain 2-like"/>
    <property type="match status" value="2"/>
</dbReference>
<dbReference type="PROSITE" id="PS50084">
    <property type="entry name" value="KH_TYPE_1"/>
    <property type="match status" value="1"/>
</dbReference>
<dbReference type="PROSITE" id="PS50126">
    <property type="entry name" value="S1"/>
    <property type="match status" value="1"/>
</dbReference>
<organism>
    <name type="scientific">Staphylococcus aureus (strain MRSA252)</name>
    <dbReference type="NCBI Taxonomy" id="282458"/>
    <lineage>
        <taxon>Bacteria</taxon>
        <taxon>Bacillati</taxon>
        <taxon>Bacillota</taxon>
        <taxon>Bacilli</taxon>
        <taxon>Bacillales</taxon>
        <taxon>Staphylococcaceae</taxon>
        <taxon>Staphylococcus</taxon>
    </lineage>
</organism>
<comment type="function">
    <text evidence="1">Involved in mRNA degradation. Catalyzes the phosphorolysis of single-stranded polyribonucleotides processively in the 3'- to 5'-direction.</text>
</comment>
<comment type="catalytic activity">
    <reaction evidence="1">
        <text>RNA(n+1) + phosphate = RNA(n) + a ribonucleoside 5'-diphosphate</text>
        <dbReference type="Rhea" id="RHEA:22096"/>
        <dbReference type="Rhea" id="RHEA-COMP:14527"/>
        <dbReference type="Rhea" id="RHEA-COMP:17342"/>
        <dbReference type="ChEBI" id="CHEBI:43474"/>
        <dbReference type="ChEBI" id="CHEBI:57930"/>
        <dbReference type="ChEBI" id="CHEBI:140395"/>
        <dbReference type="EC" id="2.7.7.8"/>
    </reaction>
</comment>
<comment type="cofactor">
    <cofactor evidence="1">
        <name>Mg(2+)</name>
        <dbReference type="ChEBI" id="CHEBI:18420"/>
    </cofactor>
</comment>
<comment type="subcellular location">
    <subcellularLocation>
        <location evidence="1">Cytoplasm</location>
    </subcellularLocation>
</comment>
<comment type="similarity">
    <text evidence="1">Belongs to the polyribonucleotide nucleotidyltransferase family.</text>
</comment>
<reference key="1">
    <citation type="journal article" date="2004" name="Proc. Natl. Acad. Sci. U.S.A.">
        <title>Complete genomes of two clinical Staphylococcus aureus strains: evidence for the rapid evolution of virulence and drug resistance.</title>
        <authorList>
            <person name="Holden M.T.G."/>
            <person name="Feil E.J."/>
            <person name="Lindsay J.A."/>
            <person name="Peacock S.J."/>
            <person name="Day N.P.J."/>
            <person name="Enright M.C."/>
            <person name="Foster T.J."/>
            <person name="Moore C.E."/>
            <person name="Hurst L."/>
            <person name="Atkin R."/>
            <person name="Barron A."/>
            <person name="Bason N."/>
            <person name="Bentley S.D."/>
            <person name="Chillingworth C."/>
            <person name="Chillingworth T."/>
            <person name="Churcher C."/>
            <person name="Clark L."/>
            <person name="Corton C."/>
            <person name="Cronin A."/>
            <person name="Doggett J."/>
            <person name="Dowd L."/>
            <person name="Feltwell T."/>
            <person name="Hance Z."/>
            <person name="Harris B."/>
            <person name="Hauser H."/>
            <person name="Holroyd S."/>
            <person name="Jagels K."/>
            <person name="James K.D."/>
            <person name="Lennard N."/>
            <person name="Line A."/>
            <person name="Mayes R."/>
            <person name="Moule S."/>
            <person name="Mungall K."/>
            <person name="Ormond D."/>
            <person name="Quail M.A."/>
            <person name="Rabbinowitsch E."/>
            <person name="Rutherford K.M."/>
            <person name="Sanders M."/>
            <person name="Sharp S."/>
            <person name="Simmonds M."/>
            <person name="Stevens K."/>
            <person name="Whitehead S."/>
            <person name="Barrell B.G."/>
            <person name="Spratt B.G."/>
            <person name="Parkhill J."/>
        </authorList>
    </citation>
    <scope>NUCLEOTIDE SEQUENCE [LARGE SCALE GENOMIC DNA]</scope>
    <source>
        <strain>MRSA252</strain>
    </source>
</reference>
<gene>
    <name evidence="1" type="primary">pnp</name>
    <name type="synonym">pnpA</name>
    <name type="ordered locus">SAR1250</name>
</gene>
<keyword id="KW-0963">Cytoplasm</keyword>
<keyword id="KW-0460">Magnesium</keyword>
<keyword id="KW-0479">Metal-binding</keyword>
<keyword id="KW-0548">Nucleotidyltransferase</keyword>
<keyword id="KW-0694">RNA-binding</keyword>
<keyword id="KW-0808">Transferase</keyword>
<evidence type="ECO:0000255" key="1">
    <source>
        <dbReference type="HAMAP-Rule" id="MF_01595"/>
    </source>
</evidence>